<dbReference type="EMBL" id="CP000382">
    <property type="protein sequence ID" value="ABK62028.1"/>
    <property type="molecule type" value="Genomic_DNA"/>
</dbReference>
<dbReference type="RefSeq" id="WP_011721218.1">
    <property type="nucleotide sequence ID" value="NC_008593.1"/>
</dbReference>
<dbReference type="SMR" id="A0PXU9"/>
<dbReference type="STRING" id="386415.NT01CX_1118"/>
<dbReference type="KEGG" id="cno:NT01CX_1118"/>
<dbReference type="eggNOG" id="COG0090">
    <property type="taxonomic scope" value="Bacteria"/>
</dbReference>
<dbReference type="HOGENOM" id="CLU_036235_2_1_9"/>
<dbReference type="Proteomes" id="UP000008220">
    <property type="component" value="Chromosome"/>
</dbReference>
<dbReference type="GO" id="GO:0015934">
    <property type="term" value="C:large ribosomal subunit"/>
    <property type="evidence" value="ECO:0007669"/>
    <property type="project" value="InterPro"/>
</dbReference>
<dbReference type="GO" id="GO:0019843">
    <property type="term" value="F:rRNA binding"/>
    <property type="evidence" value="ECO:0007669"/>
    <property type="project" value="UniProtKB-UniRule"/>
</dbReference>
<dbReference type="GO" id="GO:0003735">
    <property type="term" value="F:structural constituent of ribosome"/>
    <property type="evidence" value="ECO:0007669"/>
    <property type="project" value="InterPro"/>
</dbReference>
<dbReference type="GO" id="GO:0016740">
    <property type="term" value="F:transferase activity"/>
    <property type="evidence" value="ECO:0007669"/>
    <property type="project" value="InterPro"/>
</dbReference>
<dbReference type="GO" id="GO:0002181">
    <property type="term" value="P:cytoplasmic translation"/>
    <property type="evidence" value="ECO:0007669"/>
    <property type="project" value="TreeGrafter"/>
</dbReference>
<dbReference type="FunFam" id="2.30.30.30:FF:000001">
    <property type="entry name" value="50S ribosomal protein L2"/>
    <property type="match status" value="1"/>
</dbReference>
<dbReference type="FunFam" id="2.40.50.140:FF:000003">
    <property type="entry name" value="50S ribosomal protein L2"/>
    <property type="match status" value="1"/>
</dbReference>
<dbReference type="FunFam" id="4.10.950.10:FF:000001">
    <property type="entry name" value="50S ribosomal protein L2"/>
    <property type="match status" value="1"/>
</dbReference>
<dbReference type="Gene3D" id="2.30.30.30">
    <property type="match status" value="1"/>
</dbReference>
<dbReference type="Gene3D" id="2.40.50.140">
    <property type="entry name" value="Nucleic acid-binding proteins"/>
    <property type="match status" value="1"/>
</dbReference>
<dbReference type="Gene3D" id="4.10.950.10">
    <property type="entry name" value="Ribosomal protein L2, domain 3"/>
    <property type="match status" value="1"/>
</dbReference>
<dbReference type="HAMAP" id="MF_01320_B">
    <property type="entry name" value="Ribosomal_uL2_B"/>
    <property type="match status" value="1"/>
</dbReference>
<dbReference type="InterPro" id="IPR012340">
    <property type="entry name" value="NA-bd_OB-fold"/>
</dbReference>
<dbReference type="InterPro" id="IPR014722">
    <property type="entry name" value="Rib_uL2_dom2"/>
</dbReference>
<dbReference type="InterPro" id="IPR002171">
    <property type="entry name" value="Ribosomal_uL2"/>
</dbReference>
<dbReference type="InterPro" id="IPR005880">
    <property type="entry name" value="Ribosomal_uL2_bac/org-type"/>
</dbReference>
<dbReference type="InterPro" id="IPR022669">
    <property type="entry name" value="Ribosomal_uL2_C"/>
</dbReference>
<dbReference type="InterPro" id="IPR022671">
    <property type="entry name" value="Ribosomal_uL2_CS"/>
</dbReference>
<dbReference type="InterPro" id="IPR014726">
    <property type="entry name" value="Ribosomal_uL2_dom3"/>
</dbReference>
<dbReference type="InterPro" id="IPR022666">
    <property type="entry name" value="Ribosomal_uL2_RNA-bd_dom"/>
</dbReference>
<dbReference type="InterPro" id="IPR008991">
    <property type="entry name" value="Translation_prot_SH3-like_sf"/>
</dbReference>
<dbReference type="NCBIfam" id="TIGR01171">
    <property type="entry name" value="rplB_bact"/>
    <property type="match status" value="1"/>
</dbReference>
<dbReference type="PANTHER" id="PTHR13691:SF5">
    <property type="entry name" value="LARGE RIBOSOMAL SUBUNIT PROTEIN UL2M"/>
    <property type="match status" value="1"/>
</dbReference>
<dbReference type="PANTHER" id="PTHR13691">
    <property type="entry name" value="RIBOSOMAL PROTEIN L2"/>
    <property type="match status" value="1"/>
</dbReference>
<dbReference type="Pfam" id="PF00181">
    <property type="entry name" value="Ribosomal_L2"/>
    <property type="match status" value="1"/>
</dbReference>
<dbReference type="Pfam" id="PF03947">
    <property type="entry name" value="Ribosomal_L2_C"/>
    <property type="match status" value="1"/>
</dbReference>
<dbReference type="PIRSF" id="PIRSF002158">
    <property type="entry name" value="Ribosomal_L2"/>
    <property type="match status" value="1"/>
</dbReference>
<dbReference type="SMART" id="SM01383">
    <property type="entry name" value="Ribosomal_L2"/>
    <property type="match status" value="1"/>
</dbReference>
<dbReference type="SMART" id="SM01382">
    <property type="entry name" value="Ribosomal_L2_C"/>
    <property type="match status" value="1"/>
</dbReference>
<dbReference type="SUPFAM" id="SSF50249">
    <property type="entry name" value="Nucleic acid-binding proteins"/>
    <property type="match status" value="1"/>
</dbReference>
<dbReference type="SUPFAM" id="SSF50104">
    <property type="entry name" value="Translation proteins SH3-like domain"/>
    <property type="match status" value="1"/>
</dbReference>
<dbReference type="PROSITE" id="PS00467">
    <property type="entry name" value="RIBOSOMAL_L2"/>
    <property type="match status" value="1"/>
</dbReference>
<proteinExistence type="inferred from homology"/>
<name>RL2_CLONN</name>
<accession>A0PXU9</accession>
<organism>
    <name type="scientific">Clostridium novyi (strain NT)</name>
    <dbReference type="NCBI Taxonomy" id="386415"/>
    <lineage>
        <taxon>Bacteria</taxon>
        <taxon>Bacillati</taxon>
        <taxon>Bacillota</taxon>
        <taxon>Clostridia</taxon>
        <taxon>Eubacteriales</taxon>
        <taxon>Clostridiaceae</taxon>
        <taxon>Clostridium</taxon>
    </lineage>
</organism>
<feature type="chain" id="PRO_0000309902" description="Large ribosomal subunit protein uL2">
    <location>
        <begin position="1"/>
        <end position="277"/>
    </location>
</feature>
<feature type="region of interest" description="Disordered" evidence="2">
    <location>
        <begin position="218"/>
        <end position="277"/>
    </location>
</feature>
<comment type="function">
    <text evidence="1">One of the primary rRNA binding proteins. Required for association of the 30S and 50S subunits to form the 70S ribosome, for tRNA binding and peptide bond formation. It has been suggested to have peptidyltransferase activity; this is somewhat controversial. Makes several contacts with the 16S rRNA in the 70S ribosome.</text>
</comment>
<comment type="subunit">
    <text evidence="1">Part of the 50S ribosomal subunit. Forms a bridge to the 30S subunit in the 70S ribosome.</text>
</comment>
<comment type="similarity">
    <text evidence="1">Belongs to the universal ribosomal protein uL2 family.</text>
</comment>
<gene>
    <name evidence="1" type="primary">rplB</name>
    <name type="ordered locus">NT01CX_1118</name>
</gene>
<evidence type="ECO:0000255" key="1">
    <source>
        <dbReference type="HAMAP-Rule" id="MF_01320"/>
    </source>
</evidence>
<evidence type="ECO:0000256" key="2">
    <source>
        <dbReference type="SAM" id="MobiDB-lite"/>
    </source>
</evidence>
<evidence type="ECO:0000305" key="3"/>
<sequence>MAVKKFRPITPSLRQMTVATFEEITTDKPEKSLLVSLNKKAGRNSQGKITVRHRGGGAKRKYRIIDFKRTKDGIPAKVASIEYDPNRTAYIALVVYADGEKRYIIAPVGLKVGDVVMSGVDADIKVGNALPLKNIPVGTVIHNVELQAGKGAQLVRAAGSSAQLMAKEGKYAILRLPSGEMRYVRIECRAAIGTVSNVTNDIINIGKAGRKRHLGFRPTVRGSVMNPNDHPHGGGEGKSPIGHPSPLTPWGKPALGYKTRKNKKYSDGMIIKRRGQK</sequence>
<keyword id="KW-1185">Reference proteome</keyword>
<keyword id="KW-0687">Ribonucleoprotein</keyword>
<keyword id="KW-0689">Ribosomal protein</keyword>
<keyword id="KW-0694">RNA-binding</keyword>
<keyword id="KW-0699">rRNA-binding</keyword>
<reference key="1">
    <citation type="journal article" date="2006" name="Nat. Biotechnol.">
        <title>The genome and transcriptomes of the anti-tumor agent Clostridium novyi-NT.</title>
        <authorList>
            <person name="Bettegowda C."/>
            <person name="Huang X."/>
            <person name="Lin J."/>
            <person name="Cheong I."/>
            <person name="Kohli M."/>
            <person name="Szabo S.A."/>
            <person name="Zhang X."/>
            <person name="Diaz L.A. Jr."/>
            <person name="Velculescu V.E."/>
            <person name="Parmigiani G."/>
            <person name="Kinzler K.W."/>
            <person name="Vogelstein B."/>
            <person name="Zhou S."/>
        </authorList>
    </citation>
    <scope>NUCLEOTIDE SEQUENCE [LARGE SCALE GENOMIC DNA]</scope>
    <source>
        <strain>NT</strain>
    </source>
</reference>
<protein>
    <recommendedName>
        <fullName evidence="1">Large ribosomal subunit protein uL2</fullName>
    </recommendedName>
    <alternativeName>
        <fullName evidence="3">50S ribosomal protein L2</fullName>
    </alternativeName>
</protein>